<feature type="chain" id="PRO_0000130639" description="Large ribosomal subunit protein uL24">
    <location>
        <begin position="1"/>
        <end position="104"/>
    </location>
</feature>
<evidence type="ECO:0000255" key="1">
    <source>
        <dbReference type="HAMAP-Rule" id="MF_01326"/>
    </source>
</evidence>
<evidence type="ECO:0000305" key="2"/>
<name>RL24_CAUVC</name>
<reference key="1">
    <citation type="journal article" date="2001" name="Proc. Natl. Acad. Sci. U.S.A.">
        <title>Complete genome sequence of Caulobacter crescentus.</title>
        <authorList>
            <person name="Nierman W.C."/>
            <person name="Feldblyum T.V."/>
            <person name="Laub M.T."/>
            <person name="Paulsen I.T."/>
            <person name="Nelson K.E."/>
            <person name="Eisen J.A."/>
            <person name="Heidelberg J.F."/>
            <person name="Alley M.R.K."/>
            <person name="Ohta N."/>
            <person name="Maddock J.R."/>
            <person name="Potocka I."/>
            <person name="Nelson W.C."/>
            <person name="Newton A."/>
            <person name="Stephens C."/>
            <person name="Phadke N.D."/>
            <person name="Ely B."/>
            <person name="DeBoy R.T."/>
            <person name="Dodson R.J."/>
            <person name="Durkin A.S."/>
            <person name="Gwinn M.L."/>
            <person name="Haft D.H."/>
            <person name="Kolonay J.F."/>
            <person name="Smit J."/>
            <person name="Craven M.B."/>
            <person name="Khouri H.M."/>
            <person name="Shetty J."/>
            <person name="Berry K.J."/>
            <person name="Utterback T.R."/>
            <person name="Tran K."/>
            <person name="Wolf A.M."/>
            <person name="Vamathevan J.J."/>
            <person name="Ermolaeva M.D."/>
            <person name="White O."/>
            <person name="Salzberg S.L."/>
            <person name="Venter J.C."/>
            <person name="Shapiro L."/>
            <person name="Fraser C.M."/>
        </authorList>
    </citation>
    <scope>NUCLEOTIDE SEQUENCE [LARGE SCALE GENOMIC DNA]</scope>
    <source>
        <strain>ATCC 19089 / CIP 103742 / CB 15</strain>
    </source>
</reference>
<protein>
    <recommendedName>
        <fullName evidence="1">Large ribosomal subunit protein uL24</fullName>
    </recommendedName>
    <alternativeName>
        <fullName evidence="2">50S ribosomal protein L24</fullName>
    </alternativeName>
</protein>
<comment type="function">
    <text evidence="1">One of two assembly initiator proteins, it binds directly to the 5'-end of the 23S rRNA, where it nucleates assembly of the 50S subunit.</text>
</comment>
<comment type="function">
    <text evidence="1">One of the proteins that surrounds the polypeptide exit tunnel on the outside of the subunit.</text>
</comment>
<comment type="subunit">
    <text evidence="1">Part of the 50S ribosomal subunit.</text>
</comment>
<comment type="similarity">
    <text evidence="1">Belongs to the universal ribosomal protein uL24 family.</text>
</comment>
<proteinExistence type="inferred from homology"/>
<sequence>MAAKIKKGDRVVVLAGKDKGKQGSVLQVLPKDNRVVVEGVNMVSRHTKPTQADPQGGIKNKEAALHVSNVAVVDSNGKPTRVGFKIEGDKKVRVAKTTGEVING</sequence>
<accession>Q9A8U2</accession>
<organism>
    <name type="scientific">Caulobacter vibrioides (strain ATCC 19089 / CIP 103742 / CB 15)</name>
    <name type="common">Caulobacter crescentus</name>
    <dbReference type="NCBI Taxonomy" id="190650"/>
    <lineage>
        <taxon>Bacteria</taxon>
        <taxon>Pseudomonadati</taxon>
        <taxon>Pseudomonadota</taxon>
        <taxon>Alphaproteobacteria</taxon>
        <taxon>Caulobacterales</taxon>
        <taxon>Caulobacteraceae</taxon>
        <taxon>Caulobacter</taxon>
    </lineage>
</organism>
<dbReference type="EMBL" id="AE005673">
    <property type="protein sequence ID" value="AAK23240.1"/>
    <property type="molecule type" value="Genomic_DNA"/>
</dbReference>
<dbReference type="PIR" id="D87405">
    <property type="entry name" value="D87405"/>
</dbReference>
<dbReference type="RefSeq" id="NP_420072.1">
    <property type="nucleotide sequence ID" value="NC_002696.2"/>
</dbReference>
<dbReference type="RefSeq" id="WP_010919138.1">
    <property type="nucleotide sequence ID" value="NC_002696.2"/>
</dbReference>
<dbReference type="SMR" id="Q9A8U2"/>
<dbReference type="STRING" id="190650.CC_1259"/>
<dbReference type="EnsemblBacteria" id="AAK23240">
    <property type="protein sequence ID" value="AAK23240"/>
    <property type="gene ID" value="CC_1259"/>
</dbReference>
<dbReference type="KEGG" id="ccr:CC_1259"/>
<dbReference type="PATRIC" id="fig|190650.5.peg.1284"/>
<dbReference type="eggNOG" id="COG0198">
    <property type="taxonomic scope" value="Bacteria"/>
</dbReference>
<dbReference type="HOGENOM" id="CLU_093315_2_2_5"/>
<dbReference type="BioCyc" id="CAULO:CC1259-MONOMER"/>
<dbReference type="Proteomes" id="UP000001816">
    <property type="component" value="Chromosome"/>
</dbReference>
<dbReference type="GO" id="GO:1990904">
    <property type="term" value="C:ribonucleoprotein complex"/>
    <property type="evidence" value="ECO:0007669"/>
    <property type="project" value="UniProtKB-KW"/>
</dbReference>
<dbReference type="GO" id="GO:0005840">
    <property type="term" value="C:ribosome"/>
    <property type="evidence" value="ECO:0007669"/>
    <property type="project" value="UniProtKB-KW"/>
</dbReference>
<dbReference type="GO" id="GO:0019843">
    <property type="term" value="F:rRNA binding"/>
    <property type="evidence" value="ECO:0007669"/>
    <property type="project" value="UniProtKB-UniRule"/>
</dbReference>
<dbReference type="GO" id="GO:0003735">
    <property type="term" value="F:structural constituent of ribosome"/>
    <property type="evidence" value="ECO:0007669"/>
    <property type="project" value="InterPro"/>
</dbReference>
<dbReference type="GO" id="GO:0006412">
    <property type="term" value="P:translation"/>
    <property type="evidence" value="ECO:0007669"/>
    <property type="project" value="UniProtKB-UniRule"/>
</dbReference>
<dbReference type="CDD" id="cd06089">
    <property type="entry name" value="KOW_RPL26"/>
    <property type="match status" value="1"/>
</dbReference>
<dbReference type="FunFam" id="2.30.30.30:FF:000004">
    <property type="entry name" value="50S ribosomal protein L24"/>
    <property type="match status" value="1"/>
</dbReference>
<dbReference type="Gene3D" id="2.30.30.30">
    <property type="match status" value="1"/>
</dbReference>
<dbReference type="HAMAP" id="MF_01326_B">
    <property type="entry name" value="Ribosomal_uL24_B"/>
    <property type="match status" value="1"/>
</dbReference>
<dbReference type="InterPro" id="IPR005824">
    <property type="entry name" value="KOW"/>
</dbReference>
<dbReference type="InterPro" id="IPR014722">
    <property type="entry name" value="Rib_uL2_dom2"/>
</dbReference>
<dbReference type="InterPro" id="IPR003256">
    <property type="entry name" value="Ribosomal_uL24"/>
</dbReference>
<dbReference type="InterPro" id="IPR005825">
    <property type="entry name" value="Ribosomal_uL24_CS"/>
</dbReference>
<dbReference type="InterPro" id="IPR041988">
    <property type="entry name" value="Ribosomal_uL24_KOW"/>
</dbReference>
<dbReference type="InterPro" id="IPR008991">
    <property type="entry name" value="Translation_prot_SH3-like_sf"/>
</dbReference>
<dbReference type="NCBIfam" id="TIGR01079">
    <property type="entry name" value="rplX_bact"/>
    <property type="match status" value="1"/>
</dbReference>
<dbReference type="PANTHER" id="PTHR12903">
    <property type="entry name" value="MITOCHONDRIAL RIBOSOMAL PROTEIN L24"/>
    <property type="match status" value="1"/>
</dbReference>
<dbReference type="Pfam" id="PF00467">
    <property type="entry name" value="KOW"/>
    <property type="match status" value="1"/>
</dbReference>
<dbReference type="Pfam" id="PF17136">
    <property type="entry name" value="ribosomal_L24"/>
    <property type="match status" value="1"/>
</dbReference>
<dbReference type="SMART" id="SM00739">
    <property type="entry name" value="KOW"/>
    <property type="match status" value="1"/>
</dbReference>
<dbReference type="SUPFAM" id="SSF50104">
    <property type="entry name" value="Translation proteins SH3-like domain"/>
    <property type="match status" value="1"/>
</dbReference>
<dbReference type="PROSITE" id="PS01108">
    <property type="entry name" value="RIBOSOMAL_L24"/>
    <property type="match status" value="1"/>
</dbReference>
<gene>
    <name evidence="1" type="primary">rplX</name>
    <name type="ordered locus">CC_1259</name>
</gene>
<keyword id="KW-1185">Reference proteome</keyword>
<keyword id="KW-0687">Ribonucleoprotein</keyword>
<keyword id="KW-0689">Ribosomal protein</keyword>
<keyword id="KW-0694">RNA-binding</keyword>
<keyword id="KW-0699">rRNA-binding</keyword>